<comment type="catalytic activity">
    <reaction evidence="1">
        <text>(6R)-10-formyltetrahydrofolate + 5-amino-1-(5-phospho-beta-D-ribosyl)imidazole-4-carboxamide = 5-formamido-1-(5-phospho-D-ribosyl)imidazole-4-carboxamide + (6S)-5,6,7,8-tetrahydrofolate</text>
        <dbReference type="Rhea" id="RHEA:22192"/>
        <dbReference type="ChEBI" id="CHEBI:57453"/>
        <dbReference type="ChEBI" id="CHEBI:58467"/>
        <dbReference type="ChEBI" id="CHEBI:58475"/>
        <dbReference type="ChEBI" id="CHEBI:195366"/>
        <dbReference type="EC" id="2.1.2.3"/>
    </reaction>
</comment>
<comment type="catalytic activity">
    <reaction evidence="1">
        <text>IMP + H2O = 5-formamido-1-(5-phospho-D-ribosyl)imidazole-4-carboxamide</text>
        <dbReference type="Rhea" id="RHEA:18445"/>
        <dbReference type="ChEBI" id="CHEBI:15377"/>
        <dbReference type="ChEBI" id="CHEBI:58053"/>
        <dbReference type="ChEBI" id="CHEBI:58467"/>
        <dbReference type="EC" id="3.5.4.10"/>
    </reaction>
</comment>
<comment type="pathway">
    <text evidence="1">Purine metabolism; IMP biosynthesis via de novo pathway; 5-formamido-1-(5-phospho-D-ribosyl)imidazole-4-carboxamide from 5-amino-1-(5-phospho-D-ribosyl)imidazole-4-carboxamide (10-formyl THF route): step 1/1.</text>
</comment>
<comment type="pathway">
    <text evidence="1">Purine metabolism; IMP biosynthesis via de novo pathway; IMP from 5-formamido-1-(5-phospho-D-ribosyl)imidazole-4-carboxamide: step 1/1.</text>
</comment>
<comment type="domain">
    <text evidence="1">The IMP cyclohydrolase activity resides in the N-terminal region.</text>
</comment>
<comment type="similarity">
    <text evidence="1">Belongs to the PurH family.</text>
</comment>
<accession>B7KGS0</accession>
<feature type="chain" id="PRO_1000117868" description="Bifunctional purine biosynthesis protein PurH">
    <location>
        <begin position="1"/>
        <end position="517"/>
    </location>
</feature>
<feature type="domain" description="MGS-like" evidence="2">
    <location>
        <begin position="1"/>
        <end position="146"/>
    </location>
</feature>
<reference key="1">
    <citation type="journal article" date="2011" name="MBio">
        <title>Novel metabolic attributes of the genus Cyanothece, comprising a group of unicellular nitrogen-fixing Cyanobacteria.</title>
        <authorList>
            <person name="Bandyopadhyay A."/>
            <person name="Elvitigala T."/>
            <person name="Welsh E."/>
            <person name="Stockel J."/>
            <person name="Liberton M."/>
            <person name="Min H."/>
            <person name="Sherman L.A."/>
            <person name="Pakrasi H.B."/>
        </authorList>
    </citation>
    <scope>NUCLEOTIDE SEQUENCE [LARGE SCALE GENOMIC DNA]</scope>
    <source>
        <strain>PCC 7424</strain>
    </source>
</reference>
<organism>
    <name type="scientific">Gloeothece citriformis (strain PCC 7424)</name>
    <name type="common">Cyanothece sp. (strain PCC 7424)</name>
    <dbReference type="NCBI Taxonomy" id="65393"/>
    <lineage>
        <taxon>Bacteria</taxon>
        <taxon>Bacillati</taxon>
        <taxon>Cyanobacteriota</taxon>
        <taxon>Cyanophyceae</taxon>
        <taxon>Oscillatoriophycideae</taxon>
        <taxon>Chroococcales</taxon>
        <taxon>Aphanothecaceae</taxon>
        <taxon>Gloeothece</taxon>
        <taxon>Gloeothece citriformis</taxon>
    </lineage>
</organism>
<protein>
    <recommendedName>
        <fullName evidence="1">Bifunctional purine biosynthesis protein PurH</fullName>
    </recommendedName>
    <domain>
        <recommendedName>
            <fullName evidence="1">Phosphoribosylaminoimidazolecarboxamide formyltransferase</fullName>
            <ecNumber evidence="1">2.1.2.3</ecNumber>
        </recommendedName>
        <alternativeName>
            <fullName evidence="1">AICAR transformylase</fullName>
        </alternativeName>
    </domain>
    <domain>
        <recommendedName>
            <fullName evidence="1">IMP cyclohydrolase</fullName>
            <ecNumber evidence="1">3.5.4.10</ecNumber>
        </recommendedName>
        <alternativeName>
            <fullName evidence="1">ATIC</fullName>
        </alternativeName>
        <alternativeName>
            <fullName evidence="1">IMP synthase</fullName>
        </alternativeName>
        <alternativeName>
            <fullName evidence="1">Inosinicase</fullName>
        </alternativeName>
    </domain>
</protein>
<name>PUR9_GLOC7</name>
<gene>
    <name evidence="1" type="primary">purH</name>
    <name type="ordered locus">PCC7424_3609</name>
</gene>
<proteinExistence type="inferred from homology"/>
<keyword id="KW-0378">Hydrolase</keyword>
<keyword id="KW-0511">Multifunctional enzyme</keyword>
<keyword id="KW-0658">Purine biosynthesis</keyword>
<keyword id="KW-1185">Reference proteome</keyword>
<keyword id="KW-0808">Transferase</keyword>
<sequence>MGRLVLLSVSDKTGLIELARQLVEEFEFEIISSGGTAKSLQDAGIPVIKVGDYTGSPEILGGRVKTLHPRIHGGILARRDVPQDLKDLDANNIRPLDLVVVNLYPFEQTIAKDNVTVAQAIEQIDIGGPAMLRATAKNFAHLTVLCNPKYYQPYLEELRQHNGETSLAFRQKMAGETFALTNAYDQAIASYFASLTPEATENPLPTRFSVAGLELQSLRYGENPHQSASWYQSGTQPTGWTAATKLQGKELSYNNLVDLEAARRIIVEFDRSEPSCAILKHTNPCGVAVGTTLAEAYNKAFNADSMSAFGGIVALNQPIDPETAKALTKTFLECVVAPGCDEEAQKILSAKSNVRVLILPDLRSGPKQTVKVIAGGLLVQASDDALDNPETWQVVTEKQPTPEMMAELLFGWKVAKHVKSNAIVVSKNRTTLGVGAGQMNRVGSVKIALETAGEAAKGGYLASDGFFPFDDSVRTAAAAGITGIIQPGGSLKDKDSIKAANELGLVMVLTGMRHFLH</sequence>
<dbReference type="EC" id="2.1.2.3" evidence="1"/>
<dbReference type="EC" id="3.5.4.10" evidence="1"/>
<dbReference type="EMBL" id="CP001291">
    <property type="protein sequence ID" value="ACK71997.1"/>
    <property type="molecule type" value="Genomic_DNA"/>
</dbReference>
<dbReference type="RefSeq" id="WP_015955590.1">
    <property type="nucleotide sequence ID" value="NC_011729.1"/>
</dbReference>
<dbReference type="SMR" id="B7KGS0"/>
<dbReference type="STRING" id="65393.PCC7424_3609"/>
<dbReference type="KEGG" id="cyc:PCC7424_3609"/>
<dbReference type="eggNOG" id="COG0138">
    <property type="taxonomic scope" value="Bacteria"/>
</dbReference>
<dbReference type="HOGENOM" id="CLU_016316_5_2_3"/>
<dbReference type="OrthoDB" id="9802065at2"/>
<dbReference type="UniPathway" id="UPA00074">
    <property type="reaction ID" value="UER00133"/>
</dbReference>
<dbReference type="UniPathway" id="UPA00074">
    <property type="reaction ID" value="UER00135"/>
</dbReference>
<dbReference type="Proteomes" id="UP000002384">
    <property type="component" value="Chromosome"/>
</dbReference>
<dbReference type="GO" id="GO:0005829">
    <property type="term" value="C:cytosol"/>
    <property type="evidence" value="ECO:0007669"/>
    <property type="project" value="TreeGrafter"/>
</dbReference>
<dbReference type="GO" id="GO:0003937">
    <property type="term" value="F:IMP cyclohydrolase activity"/>
    <property type="evidence" value="ECO:0007669"/>
    <property type="project" value="UniProtKB-UniRule"/>
</dbReference>
<dbReference type="GO" id="GO:0004643">
    <property type="term" value="F:phosphoribosylaminoimidazolecarboxamide formyltransferase activity"/>
    <property type="evidence" value="ECO:0007669"/>
    <property type="project" value="UniProtKB-UniRule"/>
</dbReference>
<dbReference type="GO" id="GO:0006189">
    <property type="term" value="P:'de novo' IMP biosynthetic process"/>
    <property type="evidence" value="ECO:0007669"/>
    <property type="project" value="UniProtKB-UniRule"/>
</dbReference>
<dbReference type="CDD" id="cd01421">
    <property type="entry name" value="IMPCH"/>
    <property type="match status" value="1"/>
</dbReference>
<dbReference type="FunFam" id="3.40.140.20:FF:000001">
    <property type="entry name" value="Bifunctional purine biosynthesis protein PurH"/>
    <property type="match status" value="1"/>
</dbReference>
<dbReference type="FunFam" id="3.40.50.1380:FF:000001">
    <property type="entry name" value="Bifunctional purine biosynthesis protein PurH"/>
    <property type="match status" value="1"/>
</dbReference>
<dbReference type="Gene3D" id="3.40.140.20">
    <property type="match status" value="2"/>
</dbReference>
<dbReference type="Gene3D" id="3.40.50.1380">
    <property type="entry name" value="Methylglyoxal synthase-like domain"/>
    <property type="match status" value="1"/>
</dbReference>
<dbReference type="HAMAP" id="MF_00139">
    <property type="entry name" value="PurH"/>
    <property type="match status" value="1"/>
</dbReference>
<dbReference type="InterPro" id="IPR024051">
    <property type="entry name" value="AICAR_Tfase_dup_dom_sf"/>
</dbReference>
<dbReference type="InterPro" id="IPR016193">
    <property type="entry name" value="Cytidine_deaminase-like"/>
</dbReference>
<dbReference type="InterPro" id="IPR011607">
    <property type="entry name" value="MGS-like_dom"/>
</dbReference>
<dbReference type="InterPro" id="IPR036914">
    <property type="entry name" value="MGS-like_dom_sf"/>
</dbReference>
<dbReference type="InterPro" id="IPR002695">
    <property type="entry name" value="PurH-like"/>
</dbReference>
<dbReference type="NCBIfam" id="NF002049">
    <property type="entry name" value="PRK00881.1"/>
    <property type="match status" value="1"/>
</dbReference>
<dbReference type="NCBIfam" id="TIGR00355">
    <property type="entry name" value="purH"/>
    <property type="match status" value="1"/>
</dbReference>
<dbReference type="PANTHER" id="PTHR11692:SF0">
    <property type="entry name" value="BIFUNCTIONAL PURINE BIOSYNTHESIS PROTEIN ATIC"/>
    <property type="match status" value="1"/>
</dbReference>
<dbReference type="PANTHER" id="PTHR11692">
    <property type="entry name" value="BIFUNCTIONAL PURINE BIOSYNTHESIS PROTEIN PURH"/>
    <property type="match status" value="1"/>
</dbReference>
<dbReference type="Pfam" id="PF01808">
    <property type="entry name" value="AICARFT_IMPCHas"/>
    <property type="match status" value="1"/>
</dbReference>
<dbReference type="Pfam" id="PF02142">
    <property type="entry name" value="MGS"/>
    <property type="match status" value="1"/>
</dbReference>
<dbReference type="PIRSF" id="PIRSF000414">
    <property type="entry name" value="AICARFT_IMPCHas"/>
    <property type="match status" value="1"/>
</dbReference>
<dbReference type="SMART" id="SM00798">
    <property type="entry name" value="AICARFT_IMPCHas"/>
    <property type="match status" value="1"/>
</dbReference>
<dbReference type="SMART" id="SM00851">
    <property type="entry name" value="MGS"/>
    <property type="match status" value="1"/>
</dbReference>
<dbReference type="SUPFAM" id="SSF53927">
    <property type="entry name" value="Cytidine deaminase-like"/>
    <property type="match status" value="1"/>
</dbReference>
<dbReference type="SUPFAM" id="SSF52335">
    <property type="entry name" value="Methylglyoxal synthase-like"/>
    <property type="match status" value="1"/>
</dbReference>
<dbReference type="PROSITE" id="PS51855">
    <property type="entry name" value="MGS"/>
    <property type="match status" value="1"/>
</dbReference>
<evidence type="ECO:0000255" key="1">
    <source>
        <dbReference type="HAMAP-Rule" id="MF_00139"/>
    </source>
</evidence>
<evidence type="ECO:0000255" key="2">
    <source>
        <dbReference type="PROSITE-ProRule" id="PRU01202"/>
    </source>
</evidence>